<gene>
    <name evidence="1" type="primary">murG</name>
    <name type="ordered locus">Moth_0843</name>
</gene>
<keyword id="KW-0131">Cell cycle</keyword>
<keyword id="KW-0132">Cell division</keyword>
<keyword id="KW-1003">Cell membrane</keyword>
<keyword id="KW-0133">Cell shape</keyword>
<keyword id="KW-0961">Cell wall biogenesis/degradation</keyword>
<keyword id="KW-0328">Glycosyltransferase</keyword>
<keyword id="KW-0472">Membrane</keyword>
<keyword id="KW-0573">Peptidoglycan synthesis</keyword>
<keyword id="KW-0808">Transferase</keyword>
<sequence length="371" mass="39696">MRVIITGGGTGGHVYPALAIARGLKEARPGVELLYIGTARGLEADVVPRAGLTLATITVQGLVRRQVWKNIPALVKTGRGLGEAWQQVRRFRPDVVVGTGGYVSGPVCLAAALQGVPVILHEQNAFPGVTNRLLAILARCVCLTFPEAASRFPRRAKLVTTGLPVRPEIIQADRDSCRQHFGLRPEQLFLVTVGGSQGARSINGAMLPILKELAGCQDVSLLQVTGRRDYEAYLQQVRTQGIDLAKYGNITIEPYVYNLEQALAAADLVIGRAGASFLAEVLARGLPSVLVPYPHAAANHQEYNARAVARQGAAVVVLDRELKGGRLYQVVFELLRSREKLKAMAAAAASLGRPGALEAIIQVILKTVESG</sequence>
<comment type="function">
    <text evidence="1">Cell wall formation. Catalyzes the transfer of a GlcNAc subunit on undecaprenyl-pyrophosphoryl-MurNAc-pentapeptide (lipid intermediate I) to form undecaprenyl-pyrophosphoryl-MurNAc-(pentapeptide)GlcNAc (lipid intermediate II).</text>
</comment>
<comment type="catalytic activity">
    <reaction evidence="1">
        <text>di-trans,octa-cis-undecaprenyl diphospho-N-acetyl-alpha-D-muramoyl-L-alanyl-D-glutamyl-meso-2,6-diaminopimeloyl-D-alanyl-D-alanine + UDP-N-acetyl-alpha-D-glucosamine = di-trans,octa-cis-undecaprenyl diphospho-[N-acetyl-alpha-D-glucosaminyl-(1-&gt;4)]-N-acetyl-alpha-D-muramoyl-L-alanyl-D-glutamyl-meso-2,6-diaminopimeloyl-D-alanyl-D-alanine + UDP + H(+)</text>
        <dbReference type="Rhea" id="RHEA:31227"/>
        <dbReference type="ChEBI" id="CHEBI:15378"/>
        <dbReference type="ChEBI" id="CHEBI:57705"/>
        <dbReference type="ChEBI" id="CHEBI:58223"/>
        <dbReference type="ChEBI" id="CHEBI:61387"/>
        <dbReference type="ChEBI" id="CHEBI:61388"/>
        <dbReference type="EC" id="2.4.1.227"/>
    </reaction>
</comment>
<comment type="pathway">
    <text evidence="1">Cell wall biogenesis; peptidoglycan biosynthesis.</text>
</comment>
<comment type="subcellular location">
    <subcellularLocation>
        <location evidence="1">Cell membrane</location>
        <topology evidence="1">Peripheral membrane protein</topology>
        <orientation evidence="1">Cytoplasmic side</orientation>
    </subcellularLocation>
</comment>
<comment type="similarity">
    <text evidence="1">Belongs to the glycosyltransferase 28 family. MurG subfamily.</text>
</comment>
<organism>
    <name type="scientific">Moorella thermoacetica (strain ATCC 39073 / JCM 9320)</name>
    <dbReference type="NCBI Taxonomy" id="264732"/>
    <lineage>
        <taxon>Bacteria</taxon>
        <taxon>Bacillati</taxon>
        <taxon>Bacillota</taxon>
        <taxon>Clostridia</taxon>
        <taxon>Moorellales</taxon>
        <taxon>Moorellaceae</taxon>
        <taxon>Moorella</taxon>
    </lineage>
</organism>
<dbReference type="EC" id="2.4.1.227" evidence="1"/>
<dbReference type="EMBL" id="CP000232">
    <property type="protein sequence ID" value="ABC19160.1"/>
    <property type="molecule type" value="Genomic_DNA"/>
</dbReference>
<dbReference type="RefSeq" id="YP_429703.1">
    <property type="nucleotide sequence ID" value="NC_007644.1"/>
</dbReference>
<dbReference type="SMR" id="Q2RK79"/>
<dbReference type="STRING" id="264732.Moth_0843"/>
<dbReference type="CAZy" id="GT28">
    <property type="family name" value="Glycosyltransferase Family 28"/>
</dbReference>
<dbReference type="EnsemblBacteria" id="ABC19160">
    <property type="protein sequence ID" value="ABC19160"/>
    <property type="gene ID" value="Moth_0843"/>
</dbReference>
<dbReference type="KEGG" id="mta:Moth_0843"/>
<dbReference type="PATRIC" id="fig|264732.11.peg.905"/>
<dbReference type="eggNOG" id="COG0707">
    <property type="taxonomic scope" value="Bacteria"/>
</dbReference>
<dbReference type="HOGENOM" id="CLU_037404_0_1_9"/>
<dbReference type="OrthoDB" id="9808936at2"/>
<dbReference type="UniPathway" id="UPA00219"/>
<dbReference type="GO" id="GO:0005886">
    <property type="term" value="C:plasma membrane"/>
    <property type="evidence" value="ECO:0007669"/>
    <property type="project" value="UniProtKB-SubCell"/>
</dbReference>
<dbReference type="GO" id="GO:0051991">
    <property type="term" value="F:UDP-N-acetyl-D-glucosamine:N-acetylmuramoyl-L-alanyl-D-glutamyl-meso-2,6-diaminopimelyl-D-alanyl-D-alanine-diphosphoundecaprenol 4-beta-N-acetylglucosaminlytransferase activity"/>
    <property type="evidence" value="ECO:0007669"/>
    <property type="project" value="RHEA"/>
</dbReference>
<dbReference type="GO" id="GO:0050511">
    <property type="term" value="F:undecaprenyldiphospho-muramoylpentapeptide beta-N-acetylglucosaminyltransferase activity"/>
    <property type="evidence" value="ECO:0007669"/>
    <property type="project" value="UniProtKB-UniRule"/>
</dbReference>
<dbReference type="GO" id="GO:0005975">
    <property type="term" value="P:carbohydrate metabolic process"/>
    <property type="evidence" value="ECO:0007669"/>
    <property type="project" value="InterPro"/>
</dbReference>
<dbReference type="GO" id="GO:0051301">
    <property type="term" value="P:cell division"/>
    <property type="evidence" value="ECO:0007669"/>
    <property type="project" value="UniProtKB-KW"/>
</dbReference>
<dbReference type="GO" id="GO:0071555">
    <property type="term" value="P:cell wall organization"/>
    <property type="evidence" value="ECO:0007669"/>
    <property type="project" value="UniProtKB-KW"/>
</dbReference>
<dbReference type="GO" id="GO:0030259">
    <property type="term" value="P:lipid glycosylation"/>
    <property type="evidence" value="ECO:0007669"/>
    <property type="project" value="UniProtKB-UniRule"/>
</dbReference>
<dbReference type="GO" id="GO:0009252">
    <property type="term" value="P:peptidoglycan biosynthetic process"/>
    <property type="evidence" value="ECO:0007669"/>
    <property type="project" value="UniProtKB-UniRule"/>
</dbReference>
<dbReference type="GO" id="GO:0008360">
    <property type="term" value="P:regulation of cell shape"/>
    <property type="evidence" value="ECO:0007669"/>
    <property type="project" value="UniProtKB-KW"/>
</dbReference>
<dbReference type="CDD" id="cd03785">
    <property type="entry name" value="GT28_MurG"/>
    <property type="match status" value="1"/>
</dbReference>
<dbReference type="Gene3D" id="3.40.50.2000">
    <property type="entry name" value="Glycogen Phosphorylase B"/>
    <property type="match status" value="2"/>
</dbReference>
<dbReference type="HAMAP" id="MF_00033">
    <property type="entry name" value="MurG"/>
    <property type="match status" value="1"/>
</dbReference>
<dbReference type="InterPro" id="IPR006009">
    <property type="entry name" value="GlcNAc_MurG"/>
</dbReference>
<dbReference type="InterPro" id="IPR007235">
    <property type="entry name" value="Glyco_trans_28_C"/>
</dbReference>
<dbReference type="InterPro" id="IPR004276">
    <property type="entry name" value="GlycoTrans_28_N"/>
</dbReference>
<dbReference type="NCBIfam" id="TIGR01133">
    <property type="entry name" value="murG"/>
    <property type="match status" value="1"/>
</dbReference>
<dbReference type="PANTHER" id="PTHR21015:SF22">
    <property type="entry name" value="GLYCOSYLTRANSFERASE"/>
    <property type="match status" value="1"/>
</dbReference>
<dbReference type="PANTHER" id="PTHR21015">
    <property type="entry name" value="UDP-N-ACETYLGLUCOSAMINE--N-ACETYLMURAMYL-(PENTAPEPTIDE) PYROPHOSPHORYL-UNDECAPRENOL N-ACETYLGLUCOSAMINE TRANSFERASE 1"/>
    <property type="match status" value="1"/>
</dbReference>
<dbReference type="Pfam" id="PF04101">
    <property type="entry name" value="Glyco_tran_28_C"/>
    <property type="match status" value="1"/>
</dbReference>
<dbReference type="Pfam" id="PF03033">
    <property type="entry name" value="Glyco_transf_28"/>
    <property type="match status" value="1"/>
</dbReference>
<dbReference type="SUPFAM" id="SSF53756">
    <property type="entry name" value="UDP-Glycosyltransferase/glycogen phosphorylase"/>
    <property type="match status" value="1"/>
</dbReference>
<name>MURG_MOOTA</name>
<reference key="1">
    <citation type="journal article" date="2008" name="Environ. Microbiol.">
        <title>The complete genome sequence of Moorella thermoacetica (f. Clostridium thermoaceticum).</title>
        <authorList>
            <person name="Pierce E."/>
            <person name="Xie G."/>
            <person name="Barabote R.D."/>
            <person name="Saunders E."/>
            <person name="Han C.S."/>
            <person name="Detter J.C."/>
            <person name="Richardson P."/>
            <person name="Brettin T.S."/>
            <person name="Das A."/>
            <person name="Ljungdahl L.G."/>
            <person name="Ragsdale S.W."/>
        </authorList>
    </citation>
    <scope>NUCLEOTIDE SEQUENCE [LARGE SCALE GENOMIC DNA]</scope>
    <source>
        <strain>ATCC 39073 / JCM 9320</strain>
    </source>
</reference>
<feature type="chain" id="PRO_0000315118" description="UDP-N-acetylglucosamine--N-acetylmuramyl-(pentapeptide) pyrophosphoryl-undecaprenol N-acetylglucosamine transferase">
    <location>
        <begin position="1"/>
        <end position="371"/>
    </location>
</feature>
<feature type="binding site" evidence="1">
    <location>
        <begin position="10"/>
        <end position="12"/>
    </location>
    <ligand>
        <name>UDP-N-acetyl-alpha-D-glucosamine</name>
        <dbReference type="ChEBI" id="CHEBI:57705"/>
    </ligand>
</feature>
<feature type="binding site" evidence="1">
    <location>
        <position position="124"/>
    </location>
    <ligand>
        <name>UDP-N-acetyl-alpha-D-glucosamine</name>
        <dbReference type="ChEBI" id="CHEBI:57705"/>
    </ligand>
</feature>
<feature type="binding site" evidence="1">
    <location>
        <position position="166"/>
    </location>
    <ligand>
        <name>UDP-N-acetyl-alpha-D-glucosamine</name>
        <dbReference type="ChEBI" id="CHEBI:57705"/>
    </ligand>
</feature>
<feature type="binding site" evidence="1">
    <location>
        <position position="196"/>
    </location>
    <ligand>
        <name>UDP-N-acetyl-alpha-D-glucosamine</name>
        <dbReference type="ChEBI" id="CHEBI:57705"/>
    </ligand>
</feature>
<feature type="binding site" evidence="1">
    <location>
        <position position="301"/>
    </location>
    <ligand>
        <name>UDP-N-acetyl-alpha-D-glucosamine</name>
        <dbReference type="ChEBI" id="CHEBI:57705"/>
    </ligand>
</feature>
<accession>Q2RK79</accession>
<evidence type="ECO:0000255" key="1">
    <source>
        <dbReference type="HAMAP-Rule" id="MF_00033"/>
    </source>
</evidence>
<proteinExistence type="inferred from homology"/>
<protein>
    <recommendedName>
        <fullName evidence="1">UDP-N-acetylglucosamine--N-acetylmuramyl-(pentapeptide) pyrophosphoryl-undecaprenol N-acetylglucosamine transferase</fullName>
        <ecNumber evidence="1">2.4.1.227</ecNumber>
    </recommendedName>
    <alternativeName>
        <fullName evidence="1">Undecaprenyl-PP-MurNAc-pentapeptide-UDPGlcNAc GlcNAc transferase</fullName>
    </alternativeName>
</protein>